<keyword id="KW-0002">3D-structure</keyword>
<keyword id="KW-0007">Acetylation</keyword>
<keyword id="KW-0143">Chaperone</keyword>
<keyword id="KW-0164">Citrullination</keyword>
<keyword id="KW-0963">Cytoplasm</keyword>
<keyword id="KW-0903">Direct protein sequencing</keyword>
<keyword id="KW-0945">Host-virus interaction</keyword>
<keyword id="KW-0488">Methylation</keyword>
<keyword id="KW-0507">mRNA processing</keyword>
<keyword id="KW-0508">mRNA splicing</keyword>
<keyword id="KW-0509">mRNA transport</keyword>
<keyword id="KW-0539">Nucleus</keyword>
<keyword id="KW-0597">Phosphoprotein</keyword>
<keyword id="KW-1267">Proteomics identification</keyword>
<keyword id="KW-1185">Reference proteome</keyword>
<keyword id="KW-0694">RNA-binding</keyword>
<keyword id="KW-0747">Spliceosome</keyword>
<keyword id="KW-0813">Transport</keyword>
<sequence length="257" mass="26888">MADKMDMSLDDIIKLNRSQRGGRGGGRGRGRAGSQGGRGGGAQAAARVNRGGGPIRNRPAIARGAAGGGGRNRPAPYSRPKQLPDKWQHDLFDSGFGGGAGVETGGKLLVSNLDFGVSDADIQELFAEFGTLKKAAVHYDRSGRSLGTADVHFERKADALKAMKQYNGVPLDGRPMNIQLVTSQIDAQRRPAQSVNRGGMTRNRGAGGFGGGGGTRRGTRGGARGRGRGAGRNSKQQLSAEELDAQLDAYNARMDTS</sequence>
<organism>
    <name type="scientific">Homo sapiens</name>
    <name type="common">Human</name>
    <dbReference type="NCBI Taxonomy" id="9606"/>
    <lineage>
        <taxon>Eukaryota</taxon>
        <taxon>Metazoa</taxon>
        <taxon>Chordata</taxon>
        <taxon>Craniata</taxon>
        <taxon>Vertebrata</taxon>
        <taxon>Euteleostomi</taxon>
        <taxon>Mammalia</taxon>
        <taxon>Eutheria</taxon>
        <taxon>Euarchontoglires</taxon>
        <taxon>Primates</taxon>
        <taxon>Haplorrhini</taxon>
        <taxon>Catarrhini</taxon>
        <taxon>Hominidae</taxon>
        <taxon>Homo</taxon>
    </lineage>
</organism>
<name>THOC4_HUMAN</name>
<reference key="1">
    <citation type="journal article" date="2006" name="Nature">
        <title>DNA sequence of human chromosome 17 and analysis of rearrangement in the human lineage.</title>
        <authorList>
            <person name="Zody M.C."/>
            <person name="Garber M."/>
            <person name="Adams D.J."/>
            <person name="Sharpe T."/>
            <person name="Harrow J."/>
            <person name="Lupski J.R."/>
            <person name="Nicholson C."/>
            <person name="Searle S.M."/>
            <person name="Wilming L."/>
            <person name="Young S.K."/>
            <person name="Abouelleil A."/>
            <person name="Allen N.R."/>
            <person name="Bi W."/>
            <person name="Bloom T."/>
            <person name="Borowsky M.L."/>
            <person name="Bugalter B.E."/>
            <person name="Butler J."/>
            <person name="Chang J.L."/>
            <person name="Chen C.-K."/>
            <person name="Cook A."/>
            <person name="Corum B."/>
            <person name="Cuomo C.A."/>
            <person name="de Jong P.J."/>
            <person name="DeCaprio D."/>
            <person name="Dewar K."/>
            <person name="FitzGerald M."/>
            <person name="Gilbert J."/>
            <person name="Gibson R."/>
            <person name="Gnerre S."/>
            <person name="Goldstein S."/>
            <person name="Grafham D.V."/>
            <person name="Grocock R."/>
            <person name="Hafez N."/>
            <person name="Hagopian D.S."/>
            <person name="Hart E."/>
            <person name="Norman C.H."/>
            <person name="Humphray S."/>
            <person name="Jaffe D.B."/>
            <person name="Jones M."/>
            <person name="Kamal M."/>
            <person name="Khodiyar V.K."/>
            <person name="LaButti K."/>
            <person name="Laird G."/>
            <person name="Lehoczky J."/>
            <person name="Liu X."/>
            <person name="Lokyitsang T."/>
            <person name="Loveland J."/>
            <person name="Lui A."/>
            <person name="Macdonald P."/>
            <person name="Major J.E."/>
            <person name="Matthews L."/>
            <person name="Mauceli E."/>
            <person name="McCarroll S.A."/>
            <person name="Mihalev A.H."/>
            <person name="Mudge J."/>
            <person name="Nguyen C."/>
            <person name="Nicol R."/>
            <person name="O'Leary S.B."/>
            <person name="Osoegawa K."/>
            <person name="Schwartz D.C."/>
            <person name="Shaw-Smith C."/>
            <person name="Stankiewicz P."/>
            <person name="Steward C."/>
            <person name="Swarbreck D."/>
            <person name="Venkataraman V."/>
            <person name="Whittaker C.A."/>
            <person name="Yang X."/>
            <person name="Zimmer A.R."/>
            <person name="Bradley A."/>
            <person name="Hubbard T."/>
            <person name="Birren B.W."/>
            <person name="Rogers J."/>
            <person name="Lander E.S."/>
            <person name="Nusbaum C."/>
        </authorList>
    </citation>
    <scope>NUCLEOTIDE SEQUENCE [LARGE SCALE GENOMIC DNA]</scope>
</reference>
<reference key="2">
    <citation type="journal article" date="2004" name="Genome Res.">
        <title>The status, quality, and expansion of the NIH full-length cDNA project: the Mammalian Gene Collection (MGC).</title>
        <authorList>
            <consortium name="The MGC Project Team"/>
        </authorList>
    </citation>
    <scope>NUCLEOTIDE SEQUENCE [LARGE SCALE MRNA]</scope>
    <source>
        <tissue>Lung</tissue>
    </source>
</reference>
<reference key="3">
    <citation type="submission" date="2004-10" db="UniProtKB">
        <authorList>
            <person name="Quadroni M."/>
        </authorList>
    </citation>
    <scope>PROTEIN SEQUENCE OF 2-15 AND 146-156</scope>
    <scope>CLEAVAGE OF INITIATOR METHIONINE</scope>
    <scope>ACETYLATION AT ALA-2</scope>
    <scope>IDENTIFICATION BY MASS SPECTROMETRY</scope>
    <source>
        <tissue>B-cell lymphoma</tissue>
    </source>
</reference>
<reference key="4">
    <citation type="submission" date="2008-12" db="UniProtKB">
        <authorList>
            <person name="Bienvenut W.V."/>
            <person name="Lilla S."/>
            <person name="von Kriegsheim A."/>
            <person name="Lempens A."/>
            <person name="Kolch W."/>
        </authorList>
    </citation>
    <scope>PROTEIN SEQUENCE OF 2-14; 108-134; 145-155; 165-189; 203-216 AND 236-253</scope>
    <scope>CLEAVAGE OF INITIATOR METHIONINE</scope>
    <scope>ACETYLATION AT ALA-2</scope>
    <scope>METHYLATION AT ARG-204 AND ARG-220</scope>
    <scope>IDENTIFICATION BY MASS SPECTROMETRY</scope>
    <source>
        <tissue>Ovarian carcinoma</tissue>
    </source>
</reference>
<reference key="5">
    <citation type="journal article" date="1999" name="Hum. Immunol.">
        <title>Autoantibodies to transcriptional regulation proteins DEK and ALY in a patient with systemic lupus erythematosus.</title>
        <authorList>
            <person name="Wichmann I."/>
            <person name="Garcia-Lozano J.R."/>
            <person name="Respaldiza N."/>
            <person name="Gonzalez-Escribano M.F."/>
            <person name="Nunez-Roldan A."/>
        </authorList>
    </citation>
    <scope>NUCLEOTIDE SEQUENCE [MRNA] OF 25-257</scope>
    <scope>INVOLVEMENT IN SYSTEMIC LUPUS ERYTHEMATOSUS</scope>
    <source>
        <tissue>Cervix carcinoma</tissue>
    </source>
</reference>
<reference key="6">
    <citation type="journal article" date="2002" name="Genome Res.">
        <title>Large-scale proteomic analysis of the human spliceosome.</title>
        <authorList>
            <person name="Rappsilber J."/>
            <person name="Ryder U."/>
            <person name="Lamond A.I."/>
            <person name="Mann M."/>
        </authorList>
    </citation>
    <scope>PROTEIN SEQUENCE OF 108-133</scope>
    <scope>IDENTIFICATION BY MASS SPECTROMETRY</scope>
    <scope>INTERACTION WITH THE SPLICEOSOME</scope>
</reference>
<reference key="7">
    <citation type="journal article" date="1999" name="Mol. Cell">
        <title>A human nuclear-localized chaperone that regulates dimerization, DNA binding, and transcriptional activity of bZIP proteins.</title>
        <authorList>
            <person name="Virbasius C.-M."/>
            <person name="Wagner S."/>
            <person name="Green M.R."/>
        </authorList>
    </citation>
    <scope>PROTEIN SEQUENCE OF 127-131; 182-189; 239-245 AND 249-251</scope>
    <scope>FUNCTION</scope>
    <scope>SUBCELLULAR LOCATION</scope>
</reference>
<reference key="8">
    <citation type="journal article" date="1998" name="Nat. Genet.">
        <title>Mass spectrometry and EST-database searching allows characterization of the multi-protein spliceosome complex.</title>
        <authorList>
            <person name="Neubauer G."/>
            <person name="King A."/>
            <person name="Rappsilber J."/>
            <person name="Calvio C."/>
            <person name="Watson M."/>
            <person name="Ajuh P."/>
            <person name="Sleeman J."/>
            <person name="Lamond A.I."/>
            <person name="Mann M."/>
        </authorList>
    </citation>
    <scope>PARTIAL PROTEIN SEQUENCE</scope>
    <scope>IDENTIFICATION BY MASS SPECTROMETRY</scope>
    <scope>INTERACTION WITH THE SPLICEOSOME</scope>
</reference>
<reference key="9">
    <citation type="journal article" date="2000" name="EMBO J.">
        <title>The spliceosome deposits multiple proteins 20-24 nucleotides upstream of mRNA exon-exon junctions.</title>
        <authorList>
            <person name="Le Hir H."/>
            <person name="Izaurralde E."/>
            <person name="Maquat L.E."/>
            <person name="Moore M.J."/>
        </authorList>
    </citation>
    <scope>IDENTIFICATION IN A MRNA SPLICING-DEPENDENT EXON JUNCTION COMPLEX (EJC) WITH DEK; RBM8A; RNPS1 AND SRRM1</scope>
</reference>
<reference key="10">
    <citation type="journal article" date="2001" name="EMBO J.">
        <title>Magoh, a human homolog of Drosophila mago nashi protein, is a component of the splicing-dependent exon-exon junction complex.</title>
        <authorList>
            <person name="Kataoka N."/>
            <person name="Diem M.D."/>
            <person name="Kim V.N."/>
            <person name="Yong J."/>
            <person name="Dreyfuss G."/>
        </authorList>
    </citation>
    <scope>FUNCTION</scope>
    <scope>INTERACTION WITH RBM8A; NXF1 AND THE EXON JUNCTION COMPLEX</scope>
</reference>
<reference key="11">
    <citation type="journal article" date="2001" name="Nature">
        <title>Pre-mRNA splicing and mRNA export linked by direct interactions between UAP56 and Aly.</title>
        <authorList>
            <person name="Luo M.-J."/>
            <person name="Zhou Z."/>
            <person name="Magni K."/>
            <person name="Christoforides C."/>
            <person name="Rappsilber J."/>
            <person name="Mann M."/>
            <person name="Reed R."/>
        </authorList>
    </citation>
    <scope>FUNCTION</scope>
    <scope>INTERACTION WITH NXF1</scope>
</reference>
<reference key="12">
    <citation type="journal article" date="2001" name="Science">
        <title>Role of the nonsense-mediated decay factor hUpf3 in the splicing-dependent exon-exon junction complex.</title>
        <authorList>
            <person name="Kim V.N."/>
            <person name="Kataoka N."/>
            <person name="Dreyfuss G."/>
        </authorList>
    </citation>
    <scope>IDENTIFICATION IN A MRNP COMPLEX WITH UPF3A AND UPF3B</scope>
</reference>
<reference key="13">
    <citation type="journal article" date="2002" name="J. Virol.">
        <title>ICP27 interacts with the RNA export factor Aly/REF to direct herpes simplex virus type 1 intronless mRNAs to the TAP export pathway.</title>
        <authorList>
            <person name="Chen I.-H.B."/>
            <person name="Sciabica K.S."/>
            <person name="Sandri-Goldin R.M."/>
        </authorList>
    </citation>
    <scope>FUNCTION (MICROBIAL INFECTION)</scope>
    <scope>INTERACTION WITH HHV-1 ICP27</scope>
</reference>
<reference key="14">
    <citation type="journal article" date="2002" name="Nature">
        <title>TREX is a conserved complex coupling transcription with messenger RNA export.</title>
        <authorList>
            <person name="Straesser K."/>
            <person name="Masuda S."/>
            <person name="Mason P."/>
            <person name="Pfannstiel J."/>
            <person name="Oppizzi M."/>
            <person name="Rodriguez-Navarro S."/>
            <person name="Rondon A.G."/>
            <person name="Aguilera A."/>
            <person name="Struhl K."/>
            <person name="Reed R."/>
            <person name="Hurt E."/>
        </authorList>
    </citation>
    <scope>FUNCTION</scope>
    <scope>INTERACTION WITH THE TREX COMPLEX</scope>
</reference>
<reference key="15">
    <citation type="journal article" date="2002" name="RNA">
        <title>Purification and characterization of native spliceosomes suitable for three-dimensional structural analysis.</title>
        <authorList>
            <person name="Jurica M.S."/>
            <person name="Licklider L.J."/>
            <person name="Gygi S.P."/>
            <person name="Grigorieff N."/>
            <person name="Moore M.J."/>
        </authorList>
    </citation>
    <scope>IDENTIFICATION BY MASS SPECTROMETRY</scope>
    <scope>IDENTIFICATION IN THE SPLICEOSOMAL C COMPLEX</scope>
</reference>
<reference key="16">
    <citation type="journal article" date="2003" name="J. Biol. Chem.">
        <title>An evolutionarily conserved role for SRm160 in 3'-end processing that functions independently of exon junction complex formation.</title>
        <authorList>
            <person name="McCracken S."/>
            <person name="Longman D."/>
            <person name="Johnstone I.L."/>
            <person name="Caceres J.F."/>
            <person name="Blencowe B.J."/>
        </authorList>
    </citation>
    <scope>INTERACTION WITH DDX39B; RBM8A; RNPS1 AND SRRM1</scope>
</reference>
<reference key="17">
    <citation type="journal article" date="2004" name="Nat. Methods">
        <title>Identifying and quantifying in vivo methylation sites by heavy methyl SILAC.</title>
        <authorList>
            <person name="Ong S.E."/>
            <person name="Mittler G."/>
            <person name="Mann M."/>
        </authorList>
    </citation>
    <scope>METHYLATION [LARGE SCALE ANALYSIS] AT ARG-204</scope>
    <scope>IDENTIFICATION BY MASS SPECTROMETRY [LARGE SCALE ANALYSIS]</scope>
    <source>
        <tissue>Cervix carcinoma</tissue>
    </source>
</reference>
<reference key="18">
    <citation type="journal article" date="2004" name="RNA">
        <title>eIF4A3 is a novel component of the exon junction complex.</title>
        <authorList>
            <person name="Chan C.C."/>
            <person name="Dostie J."/>
            <person name="Diem M.D."/>
            <person name="Feng W."/>
            <person name="Mann M."/>
            <person name="Rappsilber J."/>
            <person name="Dreyfuss G."/>
        </authorList>
    </citation>
    <scope>INTERACTION WITH EIF4A3 AND NXF1</scope>
</reference>
<reference key="19">
    <citation type="journal article" date="2005" name="Cancer Res.">
        <title>Linking transcriptional elongation and messenger RNA export to metastatic breast cancers.</title>
        <authorList>
            <person name="Guo S."/>
            <person name="Hakimi M.A."/>
            <person name="Baillat D."/>
            <person name="Chen X."/>
            <person name="Farber M.J."/>
            <person name="Klein-Szanto A.J."/>
            <person name="Cooch N.S."/>
            <person name="Godwin A.K."/>
            <person name="Shiekhattar R."/>
        </authorList>
    </citation>
    <scope>IDENTIFICATION IN THE TREX COMPLEX</scope>
    <scope>FUNCTION OF THE TREX COMPLEX</scope>
    <scope>IDENTIFICATION BY MASS SPECTROMETRY</scope>
</reference>
<reference key="20">
    <citation type="journal article" date="2005" name="Genes Dev.">
        <title>Recruitment of the human TREX complex to mRNA during splicing.</title>
        <authorList>
            <person name="Masuda S."/>
            <person name="Das R."/>
            <person name="Cheng H."/>
            <person name="Hurt E."/>
            <person name="Dorman N."/>
            <person name="Reed R."/>
        </authorList>
    </citation>
    <scope>IDENTIFICATION IN THE TREX COMPLEX</scope>
    <scope>FUNCTION OF THE TREX COMPLEX</scope>
    <scope>IDENTIFICATION BY MASS SPECTROMETRY</scope>
    <scope>INTERACTION WITH DDX39B</scope>
</reference>
<reference key="21">
    <citation type="journal article" date="2005" name="RNA">
        <title>Biochemical analysis of the EJC reveals two new factors and a stable tetrameric protein core.</title>
        <authorList>
            <person name="Tange T.O."/>
            <person name="Shibuya T."/>
            <person name="Jurica M.S."/>
            <person name="Moore M.J."/>
        </authorList>
    </citation>
    <scope>IDENTIFICATION IN A MRNA SPLICING-DEPENDENT EXON JUNCTION COMPLEX</scope>
    <scope>HETERODIMERIZATION</scope>
    <scope>IDENTIFICATION BY MASS SPECTROMETRY</scope>
</reference>
<reference key="22">
    <citation type="journal article" date="2006" name="Cell">
        <title>Human mRNA export machinery recruited to the 5' end of mRNA.</title>
        <authorList>
            <person name="Cheng H."/>
            <person name="Dufu K."/>
            <person name="Lee C.-S."/>
            <person name="Hsu J.L."/>
            <person name="Dias A."/>
            <person name="Reed R."/>
        </authorList>
    </citation>
    <scope>FUNCTION OF THE TREX COMPLEX</scope>
    <scope>INTERACTION WITH NCBP1</scope>
</reference>
<reference key="23">
    <citation type="journal article" date="2007" name="Genes Dev.">
        <title>The Spt6 SH2 domain binds Ser2-P RNAPII to direct Iws1-dependent mRNA splicing and export.</title>
        <authorList>
            <person name="Yoh S.M."/>
            <person name="Cho H."/>
            <person name="Pickle L."/>
            <person name="Evans R.M."/>
            <person name="Jones K.A."/>
        </authorList>
    </citation>
    <scope>INTERACTION WITH IWS1 AND EXOSC10</scope>
</reference>
<reference key="24">
    <citation type="journal article" date="2008" name="Mol. Cell. Biol.">
        <title>ATP-dependent recruitment of export factor Aly/REF onto intronless mRNAs by RNA helicase UAP56.</title>
        <authorList>
            <person name="Taniguchi I."/>
            <person name="Ohno M."/>
        </authorList>
    </citation>
    <scope>FUNCTION</scope>
    <scope>INTERACTION WITH DDX39B</scope>
</reference>
<reference key="25">
    <citation type="journal article" date="2008" name="PLoS Pathog.">
        <title>Recruitment of the complete hTREX complex is required for Kaposi's sarcoma-associated herpesvirus intronless mRNA nuclear export and virus replication.</title>
        <authorList>
            <person name="Boyne J.R."/>
            <person name="Colgan K.J."/>
            <person name="Whitehouse A."/>
        </authorList>
    </citation>
    <scope>FUNCTION (MICROBIAL INFECTION)</scope>
    <scope>SUBUNIT</scope>
    <scope>SUBCELLULAR LOCATION</scope>
    <scope>INTERACTION WITH NXF1; DDX39B AND HUMAN KAPOSI'S SARCOMA-ASSOCIATED HERPESVIRUS ORF57 PROTEIN</scope>
</reference>
<reference key="26">
    <citation type="journal article" date="2008" name="Proc. Natl. Acad. Sci. U.S.A.">
        <title>A quantitative atlas of mitotic phosphorylation.</title>
        <authorList>
            <person name="Dephoure N."/>
            <person name="Zhou C."/>
            <person name="Villen J."/>
            <person name="Beausoleil S.A."/>
            <person name="Bakalarski C.E."/>
            <person name="Elledge S.J."/>
            <person name="Gygi S.P."/>
        </authorList>
    </citation>
    <scope>IDENTIFICATION BY MASS SPECTROMETRY [LARGE SCALE ANALYSIS]</scope>
    <source>
        <tissue>Cervix carcinoma</tissue>
    </source>
</reference>
<reference key="27">
    <citation type="journal article" date="2008" name="Proc. Natl. Acad. Sci. U.S.A.">
        <title>Mutually exclusive interactions drive handover of mRNA from export adaptors to TAP.</title>
        <authorList>
            <person name="Hautbergue G.M."/>
            <person name="Hung M.L."/>
            <person name="Golovanov A.P."/>
            <person name="Lian L.Y."/>
            <person name="Wilson S.A."/>
        </authorList>
    </citation>
    <scope>FUNCTION</scope>
</reference>
<reference key="28">
    <citation type="journal article" date="2009" name="Anal. Chem.">
        <title>Lys-N and trypsin cover complementary parts of the phosphoproteome in a refined SCX-based approach.</title>
        <authorList>
            <person name="Gauci S."/>
            <person name="Helbig A.O."/>
            <person name="Slijper M."/>
            <person name="Krijgsveld J."/>
            <person name="Heck A.J."/>
            <person name="Mohammed S."/>
        </authorList>
    </citation>
    <scope>ACETYLATION [LARGE SCALE ANALYSIS] AT ALA-2</scope>
    <scope>CLEAVAGE OF INITIATOR METHIONINE [LARGE SCALE ANALYSIS]</scope>
    <scope>IDENTIFICATION BY MASS SPECTROMETRY [LARGE SCALE ANALYSIS]</scope>
</reference>
<reference key="29">
    <citation type="journal article" date="2009" name="EMBO J.">
        <title>Adaptor Aly and co-adaptor Thoc5 function in the Tap-p15-mediated nuclear export of HSP70 mRNA.</title>
        <authorList>
            <person name="Katahira J."/>
            <person name="Inoue H."/>
            <person name="Hurt E."/>
            <person name="Yoneda Y."/>
        </authorList>
    </citation>
    <scope>FUNCTION</scope>
    <scope>INTERACTION WITH THOC5 AND NXF1</scope>
</reference>
<reference key="30">
    <citation type="journal article" date="2009" name="J. Biol. Chem.">
        <title>The RNA-binding motif protein 15B (RBM15B/OTT3) acts as cofactor of the nuclear export receptor NXF1.</title>
        <authorList>
            <person name="Uranishi H."/>
            <person name="Zolotukhin A.S."/>
            <person name="Lindtner S."/>
            <person name="Warming S."/>
            <person name="Zhang G.M."/>
            <person name="Bear J."/>
            <person name="Copeland N.G."/>
            <person name="Jenkins N.A."/>
            <person name="Pavlakis G.N."/>
            <person name="Felber B.K."/>
        </authorList>
    </citation>
    <scope>INTERACTION WITH RBM15B</scope>
</reference>
<reference key="31">
    <citation type="journal article" date="2009" name="RNA">
        <title>Assembly and mobility of exon-exon junction complexes in living cells.</title>
        <authorList>
            <person name="Schmidt U."/>
            <person name="Im K.-B."/>
            <person name="Benzing C."/>
            <person name="Janjetovic S."/>
            <person name="Rippe K."/>
            <person name="Lichter P."/>
            <person name="Wachsmuth M."/>
        </authorList>
    </citation>
    <scope>SUBCELLULAR LOCATION</scope>
</reference>
<reference key="32">
    <citation type="journal article" date="2009" name="Sci. Signal.">
        <title>Quantitative phosphoproteomic analysis of T cell receptor signaling reveals system-wide modulation of protein-protein interactions.</title>
        <authorList>
            <person name="Mayya V."/>
            <person name="Lundgren D.H."/>
            <person name="Hwang S.-I."/>
            <person name="Rezaul K."/>
            <person name="Wu L."/>
            <person name="Eng J.K."/>
            <person name="Rodionov V."/>
            <person name="Han D.K."/>
        </authorList>
    </citation>
    <scope>PHOSPHORYLATION [LARGE SCALE ANALYSIS] AT SER-239</scope>
    <scope>IDENTIFICATION BY MASS SPECTROMETRY [LARGE SCALE ANALYSIS]</scope>
    <source>
        <tissue>Leukemic T-cell</tissue>
    </source>
</reference>
<reference key="33">
    <citation type="journal article" date="2010" name="Nucleic Acids Res.">
        <title>Arginine methylation of REF/ALY promotes efficient handover of mRNA to TAP/NXF1.</title>
        <authorList>
            <person name="Hung M.L."/>
            <person name="Hautbergue G.M."/>
            <person name="Snijders A.P."/>
            <person name="Dickman M.J."/>
            <person name="Wilson S.A."/>
        </authorList>
    </citation>
    <scope>METHYLATION</scope>
    <scope>MRNA-BINDING</scope>
</reference>
<reference key="34">
    <citation type="journal article" date="2010" name="Sci. Signal.">
        <title>Quantitative phosphoproteomics reveals widespread full phosphorylation site occupancy during mitosis.</title>
        <authorList>
            <person name="Olsen J.V."/>
            <person name="Vermeulen M."/>
            <person name="Santamaria A."/>
            <person name="Kumar C."/>
            <person name="Miller M.L."/>
            <person name="Jensen L.J."/>
            <person name="Gnad F."/>
            <person name="Cox J."/>
            <person name="Jensen T.S."/>
            <person name="Nigg E.A."/>
            <person name="Brunak S."/>
            <person name="Mann M."/>
        </authorList>
    </citation>
    <scope>PHOSPHORYLATION [LARGE SCALE ANALYSIS] AT SER-8; SER-94 AND SER-239</scope>
    <scope>IDENTIFICATION BY MASS SPECTROMETRY [LARGE SCALE ANALYSIS]</scope>
    <source>
        <tissue>Cervix carcinoma</tissue>
    </source>
</reference>
<reference key="35">
    <citation type="journal article" date="2011" name="BMC Syst. Biol.">
        <title>Initial characterization of the human central proteome.</title>
        <authorList>
            <person name="Burkard T.R."/>
            <person name="Planyavsky M."/>
            <person name="Kaupe I."/>
            <person name="Breitwieser F.P."/>
            <person name="Buerckstuemmer T."/>
            <person name="Bennett K.L."/>
            <person name="Superti-Furga G."/>
            <person name="Colinge J."/>
        </authorList>
    </citation>
    <scope>IDENTIFICATION BY MASS SPECTROMETRY [LARGE SCALE ANALYSIS]</scope>
</reference>
<reference key="36">
    <citation type="journal article" date="2011" name="PLoS Genet.">
        <title>Genome instability and transcription elongation impairment in human cells depleted of THO/TREX.</title>
        <authorList>
            <person name="Dominguez-Sanchez M.S."/>
            <person name="Barroso S."/>
            <person name="Gomez-Gonzalez B."/>
            <person name="Luna R."/>
            <person name="Aguilera A."/>
        </authorList>
    </citation>
    <scope>FUNCTION</scope>
</reference>
<reference key="37">
    <citation type="journal article" date="2011" name="PLoS Pathog.">
        <title>Structural basis for the recognition of cellular mRNA export factor REF by herpes viral proteins HSV-1 ICP27 and HVS ORF57.</title>
        <authorList>
            <person name="Tunnicliffe R.B."/>
            <person name="Hautbergue G.M."/>
            <person name="Kalra P."/>
            <person name="Jackson B.R."/>
            <person name="Whitehouse A."/>
            <person name="Wilson S.A."/>
            <person name="Golovanov A.P."/>
        </authorList>
    </citation>
    <scope>INTERACTION WITH HUMAN KAPOSI'S SARCOMA-ASSOCIATED HERPESVIRUS ORF57 PROTEIN</scope>
    <scope>INTERACTION WITH HUMAN HERPESVIRUS 1 ICP27 PROTEIN</scope>
</reference>
<reference key="38">
    <citation type="journal article" date="2011" name="Sci. Signal.">
        <title>System-wide temporal characterization of the proteome and phosphoproteome of human embryonic stem cell differentiation.</title>
        <authorList>
            <person name="Rigbolt K.T."/>
            <person name="Prokhorova T.A."/>
            <person name="Akimov V."/>
            <person name="Henningsen J."/>
            <person name="Johansen P.T."/>
            <person name="Kratchmarova I."/>
            <person name="Kassem M."/>
            <person name="Mann M."/>
            <person name="Olsen J.V."/>
            <person name="Blagoev B."/>
        </authorList>
    </citation>
    <scope>PHOSPHORYLATION [LARGE SCALE ANALYSIS] AT SER-239</scope>
    <scope>IDENTIFICATION BY MASS SPECTROMETRY [LARGE SCALE ANALYSIS]</scope>
</reference>
<reference key="39">
    <citation type="journal article" date="2012" name="Nat. Commun.">
        <title>TREX exposes the RNA-binding domain of Nxf1 to enable mRNA export.</title>
        <authorList>
            <person name="Viphakone N."/>
            <person name="Hautbergue G.M."/>
            <person name="Walsh M."/>
            <person name="Chang C.T."/>
            <person name="Holland A."/>
            <person name="Folco E.G."/>
            <person name="Reed R."/>
            <person name="Wilson S.A."/>
        </authorList>
    </citation>
    <scope>FUNCTION</scope>
</reference>
<reference key="40">
    <citation type="journal article" date="2013" name="Nat. Commun.">
        <authorList>
            <person name="Viphakone N."/>
            <person name="Hautbergue G.M."/>
            <person name="Walsh M."/>
            <person name="Chang C.T."/>
            <person name="Holland A."/>
            <person name="Folco E.G."/>
            <person name="Reed R."/>
            <person name="Wilson S.A."/>
        </authorList>
    </citation>
    <scope>ERRATUM OF PUBMED:22893130</scope>
</reference>
<reference key="41">
    <citation type="journal article" date="2012" name="Proc. Natl. Acad. Sci. U.S.A.">
        <title>N-terminal acetylome analyses and functional insights of the N-terminal acetyltransferase NatB.</title>
        <authorList>
            <person name="Van Damme P."/>
            <person name="Lasa M."/>
            <person name="Polevoda B."/>
            <person name="Gazquez C."/>
            <person name="Elosegui-Artola A."/>
            <person name="Kim D.S."/>
            <person name="De Juan-Pardo E."/>
            <person name="Demeyer K."/>
            <person name="Hole K."/>
            <person name="Larrea E."/>
            <person name="Timmerman E."/>
            <person name="Prieto J."/>
            <person name="Arnesen T."/>
            <person name="Sherman F."/>
            <person name="Gevaert K."/>
            <person name="Aldabe R."/>
        </authorList>
    </citation>
    <scope>ACETYLATION [LARGE SCALE ANALYSIS] AT ALA-2</scope>
    <scope>CLEAVAGE OF INITIATOR METHIONINE [LARGE SCALE ANALYSIS]</scope>
    <scope>IDENTIFICATION BY MASS SPECTROMETRY [LARGE SCALE ANALYSIS]</scope>
</reference>
<reference key="42">
    <citation type="journal article" date="2013" name="J. Proteome Res.">
        <title>Toward a comprehensive characterization of a human cancer cell phosphoproteome.</title>
        <authorList>
            <person name="Zhou H."/>
            <person name="Di Palma S."/>
            <person name="Preisinger C."/>
            <person name="Peng M."/>
            <person name="Polat A.N."/>
            <person name="Heck A.J."/>
            <person name="Mohammed S."/>
        </authorList>
    </citation>
    <scope>PHOSPHORYLATION [LARGE SCALE ANALYSIS] AT SER-8; SER-94 AND SER-239</scope>
    <scope>IDENTIFICATION BY MASS SPECTROMETRY [LARGE SCALE ANALYSIS]</scope>
    <source>
        <tissue>Cervix carcinoma</tissue>
        <tissue>Erythroleukemia</tissue>
    </source>
</reference>
<reference key="43">
    <citation type="journal article" date="2013" name="Nucleic Acids Res.">
        <title>Aly and THO are required for assembly of the human TREX complex and association of TREX components with the spliced mRNA.</title>
        <authorList>
            <person name="Chi B."/>
            <person name="Wang Q."/>
            <person name="Wu G."/>
            <person name="Tan M."/>
            <person name="Wang L."/>
            <person name="Shi M."/>
            <person name="Chang X."/>
            <person name="Cheng H."/>
        </authorList>
    </citation>
    <scope>FUNCTION</scope>
    <scope>INTERACTION WITH THOC1 AND THOC2</scope>
</reference>
<reference key="44">
    <citation type="journal article" date="2013" name="PLoS ONE">
        <title>Mapping interactions between mRNA export factors in living cells.</title>
        <authorList>
            <person name="Teng I.F."/>
            <person name="Wilson S.A."/>
        </authorList>
    </citation>
    <scope>SUBCELLULAR LOCATION</scope>
    <scope>INTERACTION WITH NXF1 AND CHTOP</scope>
</reference>
<reference key="45">
    <citation type="journal article" date="2014" name="J. Proteomics">
        <title>An enzyme assisted RP-RPLC approach for in-depth analysis of human liver phosphoproteome.</title>
        <authorList>
            <person name="Bian Y."/>
            <person name="Song C."/>
            <person name="Cheng K."/>
            <person name="Dong M."/>
            <person name="Wang F."/>
            <person name="Huang J."/>
            <person name="Sun D."/>
            <person name="Wang L."/>
            <person name="Ye M."/>
            <person name="Zou H."/>
        </authorList>
    </citation>
    <scope>IDENTIFICATION BY MASS SPECTROMETRY [LARGE SCALE ANALYSIS]</scope>
    <source>
        <tissue>Liver</tissue>
    </source>
</reference>
<reference key="46">
    <citation type="journal article" date="2014" name="Mol. Cell. Proteomics">
        <title>Immunoaffinity enrichment and mass spectrometry analysis of protein methylation.</title>
        <authorList>
            <person name="Guo A."/>
            <person name="Gu H."/>
            <person name="Zhou J."/>
            <person name="Mulhern D."/>
            <person name="Wang Y."/>
            <person name="Lee K.A."/>
            <person name="Yang V."/>
            <person name="Aguiar M."/>
            <person name="Kornhauser J."/>
            <person name="Jia X."/>
            <person name="Ren J."/>
            <person name="Beausoleil S.A."/>
            <person name="Silva J.C."/>
            <person name="Vemulapalli V."/>
            <person name="Bedford M.T."/>
            <person name="Comb M.J."/>
        </authorList>
    </citation>
    <scope>METHYLATION [LARGE SCALE ANALYSIS] AT ARG-38; ARG-58; ARG-63; ARG-71; ARG-204 AND LYS-235</scope>
    <scope>IDENTIFICATION BY MASS SPECTROMETRY [LARGE SCALE ANALYSIS]</scope>
    <source>
        <tissue>Colon carcinoma</tissue>
    </source>
</reference>
<reference key="47">
    <citation type="journal article" date="2015" name="Nucleic Acids Res.">
        <title>Luzp4 defines a new mRNA export pathway in cancer cells.</title>
        <authorList>
            <person name="Viphakone N."/>
            <person name="Cumberbatch M.G."/>
            <person name="Livingstone M.J."/>
            <person name="Heath P.R."/>
            <person name="Dickman M.J."/>
            <person name="Catto J.W."/>
            <person name="Wilson S.A."/>
        </authorList>
    </citation>
    <scope>FUNCTION</scope>
    <scope>TISSUE SPECIFICITY</scope>
</reference>
<reference key="48">
    <citation type="journal article" date="2015" name="Proteomics">
        <title>N-terminome analysis of the human mitochondrial proteome.</title>
        <authorList>
            <person name="Vaca Jacome A.S."/>
            <person name="Rabilloud T."/>
            <person name="Schaeffer-Reiss C."/>
            <person name="Rompais M."/>
            <person name="Ayoub D."/>
            <person name="Lane L."/>
            <person name="Bairoch A."/>
            <person name="Van Dorsselaer A."/>
            <person name="Carapito C."/>
        </authorList>
    </citation>
    <scope>IDENTIFICATION BY MASS SPECTROMETRY [LARGE SCALE ANALYSIS]</scope>
</reference>
<reference key="49">
    <citation type="journal article" date="2017" name="Cell Res.">
        <title>5-methylcytosine promotes mRNA export - NSUN2 as the methyltransferase and ALYREF as an m5C reader.</title>
        <authorList>
            <person name="Yang X."/>
            <person name="Yang Y."/>
            <person name="Sun B.F."/>
            <person name="Chen Y.S."/>
            <person name="Xu J.W."/>
            <person name="Lai W.Y."/>
            <person name="Li A."/>
            <person name="Wang X."/>
            <person name="Bhattarai D.P."/>
            <person name="Xiao W."/>
            <person name="Sun H.Y."/>
            <person name="Zhu Q."/>
            <person name="Ma H.L."/>
            <person name="Adhikari S."/>
            <person name="Sun M."/>
            <person name="Hao Y.J."/>
            <person name="Zhang B."/>
            <person name="Huang C.M."/>
            <person name="Huang N."/>
            <person name="Jiang G.B."/>
            <person name="Zhao Y.L."/>
            <person name="Wang H.L."/>
            <person name="Sun Y.P."/>
            <person name="Yang Y.G."/>
        </authorList>
    </citation>
    <scope>FUNCTION</scope>
    <scope>SUBCELLULAR LOCATION</scope>
    <scope>RNA-BINDING</scope>
</reference>
<reference key="50">
    <citation type="journal article" date="2018" name="Proc. Natl. Acad. Sci. U.S.A.">
        <title>Structural-functional interactions of NS1-BP protein with the splicing and mRNA export machineries for viral and host gene expression.</title>
        <authorList>
            <person name="Zhang K."/>
            <person name="Shang G."/>
            <person name="Padavannil A."/>
            <person name="Wang J."/>
            <person name="Sakthivel R."/>
            <person name="Chen X."/>
            <person name="Kim M."/>
            <person name="Thompson M.G."/>
            <person name="Garcia-Sastre A."/>
            <person name="Lynch K.W."/>
            <person name="Chen Z.J."/>
            <person name="Chook Y.M."/>
            <person name="Fontoura B.M.A."/>
        </authorList>
    </citation>
    <scope>INTERACTION WITH IVNS1ABP</scope>
</reference>
<reference evidence="40" key="51">
    <citation type="submission" date="2011-11" db="PDB data bank">
        <title>Crystal structure of a RNA binding domain of THO complex subunit 4 protein (THOC4) from Homo sapiens at 2.54 A resolution.</title>
        <authorList>
            <consortium name="Joint Center for Structural Genomics (JCSG)"/>
        </authorList>
    </citation>
    <scope>X-RAY CRYSTALLOGRAPHY (2.54 ANGSTROMS) OF 100-183</scope>
</reference>
<reference evidence="41 42" key="52">
    <citation type="journal article" date="2023" name="Nature">
        <title>mRNA recognition and packaging by the human transcription-export complex.</title>
        <authorList>
            <person name="Pacheco-Fiallos B."/>
            <person name="Vorlander M.K."/>
            <person name="Riabov-Bassat D."/>
            <person name="Fin L."/>
            <person name="O'Reilly F.J."/>
            <person name="Ayala F.I."/>
            <person name="Schellhaas U."/>
            <person name="Rappsilber J."/>
            <person name="Plaschka C."/>
        </authorList>
    </citation>
    <scope>STRUCTURE BY ELECTRON MICROSCOPY (2.40 ANGSTROMS) OF 83-182 IN COMPLEX WITH EJC AND 240-255 IN TREX COMPLEX</scope>
    <scope>FUNCTION</scope>
    <scope>SUBUNIT</scope>
    <scope>MUTAGENESIS OF TRP-87; PHE-92; PHE-115; 139-TYR--ARG-144 AND 165-GLN--PRO-170</scope>
</reference>
<proteinExistence type="evidence at protein level"/>
<accession>Q86V81</accession>
<accession>O43672</accession>
<feature type="initiator methionine" description="Removed" evidence="36 37 44 48">
    <location>
        <position position="1"/>
    </location>
</feature>
<feature type="chain" id="PRO_0000081974" description="THO complex subunit 4">
    <location>
        <begin position="2"/>
        <end position="257"/>
    </location>
</feature>
<feature type="domain" description="RRM" evidence="35">
    <location>
        <begin position="106"/>
        <end position="182"/>
    </location>
</feature>
<feature type="region of interest" description="Disordered" evidence="3">
    <location>
        <begin position="1"/>
        <end position="89"/>
    </location>
</feature>
<feature type="region of interest" description="N-terminal UAP56-binding motif" evidence="35">
    <location>
        <begin position="5"/>
        <end position="13"/>
    </location>
</feature>
<feature type="region of interest" description="RNA-binding domain 1" evidence="35">
    <location>
        <begin position="13"/>
        <end position="104"/>
    </location>
</feature>
<feature type="region of interest" description="Sufficient for RNA-binding, interaction with NXF1-NXT1 heterodimer">
    <location>
        <begin position="16"/>
        <end position="37"/>
    </location>
</feature>
<feature type="region of interest" description="Required for interactions with EJC and multimerization">
    <location>
        <begin position="55"/>
        <end position="182"/>
    </location>
</feature>
<feature type="region of interest" description="Interaction with HHV-8 ORF57 protein and with ICP27 from HHV-1" evidence="1">
    <location>
        <begin position="85"/>
        <end position="186"/>
    </location>
</feature>
<feature type="region of interest" description="RNA-binding domain 2" evidence="35">
    <location>
        <begin position="182"/>
        <end position="243"/>
    </location>
</feature>
<feature type="region of interest" description="Disordered" evidence="3">
    <location>
        <begin position="187"/>
        <end position="257"/>
    </location>
</feature>
<feature type="region of interest" description="C-terminal UAP56-binding motif" evidence="35">
    <location>
        <begin position="243"/>
        <end position="251"/>
    </location>
</feature>
<feature type="short sequence motif" description="WXHD motif" evidence="35">
    <location>
        <begin position="87"/>
        <end position="90"/>
    </location>
</feature>
<feature type="compositionally biased region" description="Basic and acidic residues" evidence="3">
    <location>
        <begin position="1"/>
        <end position="14"/>
    </location>
</feature>
<feature type="compositionally biased region" description="Gly residues" evidence="3">
    <location>
        <begin position="21"/>
        <end position="42"/>
    </location>
</feature>
<feature type="compositionally biased region" description="Low complexity" evidence="3">
    <location>
        <begin position="43"/>
        <end position="64"/>
    </location>
</feature>
<feature type="compositionally biased region" description="Gly residues" evidence="3">
    <location>
        <begin position="205"/>
        <end position="216"/>
    </location>
</feature>
<feature type="compositionally biased region" description="Basic residues" evidence="3">
    <location>
        <begin position="217"/>
        <end position="229"/>
    </location>
</feature>
<feature type="modified residue" description="N-acetylalanine" evidence="36 37 44 48">
    <location>
        <position position="2"/>
    </location>
</feature>
<feature type="modified residue" description="Phosphoserine" evidence="46 49">
    <location>
        <position position="8"/>
    </location>
</feature>
<feature type="modified residue" description="Asymmetric dimethylarginine; alternate" evidence="2">
    <location>
        <position position="38"/>
    </location>
</feature>
<feature type="modified residue" description="Omega-N-methylarginine; alternate" evidence="50">
    <location>
        <position position="38"/>
    </location>
</feature>
<feature type="modified residue" description="Omega-N-methylarginine" evidence="50">
    <location>
        <position position="58"/>
    </location>
</feature>
<feature type="modified residue" description="Omega-N-methylarginine" evidence="50">
    <location>
        <position position="63"/>
    </location>
</feature>
<feature type="modified residue" description="Omega-N-methylarginine" evidence="50">
    <location>
        <position position="71"/>
    </location>
</feature>
<feature type="modified residue" description="N6-acetyllysine" evidence="2">
    <location>
        <position position="86"/>
    </location>
</feature>
<feature type="modified residue" description="Phosphoserine" evidence="46 49">
    <location>
        <position position="94"/>
    </location>
</feature>
<feature type="modified residue" description="Citrulline" evidence="1">
    <location>
        <position position="141"/>
    </location>
</feature>
<feature type="modified residue" description="Asymmetric dimethylarginine; alternate" evidence="2">
    <location>
        <position position="197"/>
    </location>
</feature>
<feature type="modified residue" description="Omega-N-methylarginine; alternate" evidence="2">
    <location>
        <position position="197"/>
    </location>
</feature>
<feature type="modified residue" description="Asymmetric dimethylarginine; alternate" evidence="50">
    <location>
        <position position="204"/>
    </location>
</feature>
<feature type="modified residue" description="Dimethylated arginine; alternate" evidence="37 43">
    <location>
        <position position="204"/>
    </location>
</feature>
<feature type="modified residue" description="Omega-N-methylarginine; alternate" evidence="37">
    <location>
        <position position="204"/>
    </location>
</feature>
<feature type="modified residue" description="Omega-N-methylarginine" evidence="37">
    <location>
        <position position="220"/>
    </location>
</feature>
<feature type="modified residue" description="N6-methyllysine" evidence="50">
    <location>
        <position position="235"/>
    </location>
</feature>
<feature type="modified residue" description="Phosphoserine" evidence="45 46 47 49">
    <location>
        <position position="239"/>
    </location>
</feature>
<feature type="mutagenesis site" description="Disrupts interaction with the EJC-RNA complex and abolishes multimerization; when associated with S-92." evidence="35">
    <original>W</original>
    <variation>S</variation>
    <location>
        <position position="87"/>
    </location>
</feature>
<feature type="mutagenesis site" description="Disrupts interaction with the EJC-RNA complex and abolishes multimerization; when associated with S-87." evidence="35">
    <original>F</original>
    <variation>S</variation>
    <location>
        <position position="92"/>
    </location>
</feature>
<feature type="mutagenesis site" description="Disrupts interaction with the EJC-RNA complex and abolishes multimerization; when associated with 139-Y--R-144 del and 165-E--A-170." evidence="35">
    <original>F</original>
    <variation>S</variation>
    <location>
        <position position="115"/>
    </location>
</feature>
<feature type="mutagenesis site" description="Disrupts interaction with the EJC-RNA complex and abolishes multimerization; when associated with S-115 and 165-E--A-170." evidence="35">
    <original>YDRSGR</original>
    <variation>SGG</variation>
    <location>
        <begin position="139"/>
        <end position="144"/>
    </location>
</feature>
<feature type="mutagenesis site" description="Disrupts interaction with the EJC-RNA complex and abolishes multimerization; when associated with S-115 and 139-Y--R-144 del." evidence="35">
    <original>QYNGVP</original>
    <variation>EYNGAA</variation>
    <location>
        <begin position="165"/>
        <end position="170"/>
    </location>
</feature>
<feature type="sequence conflict" description="In Ref. 5; AAD09608." evidence="38" ref="5">
    <original>G</original>
    <variation>R</variation>
    <location>
        <position position="26"/>
    </location>
</feature>
<feature type="sequence conflict" description="In Ref. 5; AAD09608." evidence="38" ref="5">
    <original>QG</original>
    <variation>RA</variation>
    <location>
        <begin position="35"/>
        <end position="36"/>
    </location>
</feature>
<feature type="sequence conflict" description="In Ref. 5; AAD09608." evidence="38" ref="5">
    <original>G</original>
    <variation>R</variation>
    <location>
        <position position="39"/>
    </location>
</feature>
<feature type="sequence conflict" description="In Ref. 5; AAD09608." evidence="38" ref="5">
    <original>D</original>
    <variation>N</variation>
    <location>
        <position position="150"/>
    </location>
</feature>
<feature type="sequence conflict" description="In Ref. 5; AAD09608." evidence="38" ref="5">
    <original>V</original>
    <variation>F</variation>
    <location>
        <position position="169"/>
    </location>
</feature>
<feature type="strand" evidence="51">
    <location>
        <begin position="106"/>
        <end position="112"/>
    </location>
</feature>
<feature type="helix" evidence="51">
    <location>
        <begin position="119"/>
        <end position="126"/>
    </location>
</feature>
<feature type="strand" evidence="51">
    <location>
        <begin position="132"/>
        <end position="139"/>
    </location>
</feature>
<feature type="strand" evidence="51">
    <location>
        <begin position="145"/>
        <end position="155"/>
    </location>
</feature>
<feature type="helix" evidence="51">
    <location>
        <begin position="156"/>
        <end position="166"/>
    </location>
</feature>
<feature type="strand" evidence="51">
    <location>
        <begin position="177"/>
        <end position="180"/>
    </location>
</feature>
<comment type="function">
    <text evidence="4 7 8 9 12 15 16 18 20 21 23 28 29 30 32 33 35">Functions as an mRNA export adapter; component of the transcription/export (TREX) complex which is thought to couple mRNA transcription, processing and nuclear export, and specifically associates with spliced mRNA and not with unspliced pre-mRNA (PubMed:15833825, PubMed:15998806, PubMed:17190602). TREX is recruited to spliced mRNAs by a transcription-independent mechanism, binds to mRNA upstream of the exon-junction complex (EJC) and is recruited in a splicing- and cap-dependent manner to a region near the 5' end of the mRNA where it functions in mRNA export to the cytoplasm via the TAP/NXF1 pathway (PubMed:15833825, PubMed:15998806, PubMed:17190602). Involved in the nuclear export of intronless mRNA; proposed to be recruited to intronless mRNA by ATP-bound DDX39B (PubMed:17984224). Plays a key role in mRNP recognition and mRNA packaging by bridging the mRNP-bound EJC and the TREX core complex (PubMed:37020021). TREX recruitment occurs via an interaction between ALYREF/THOC4 and the cap-binding protein NCBP1 (PubMed:15833825, PubMed:15998806, PubMed:17190602, PubMed:37020021). Required for TREX complex assembly and for linking DDX39B to the cap-binding complex (CBC) (PubMed:15998806, PubMed:17984224, PubMed:37020021). Binds mRNA which is thought to be transferred to the NXF1-NXT1 heterodimer for export (TAP/NXF1 pathway) (PubMed:11675789, PubMed:11707413, PubMed:11979277, PubMed:15833825, PubMed:15998806, PubMed:17190602, PubMed:18364396, PubMed:22144908, PubMed:22893130, PubMed:23222130, PubMed:25662211). In conjunction with THOC5 functions in NXF1-NXT1 mediated nuclear export of HSP70 mRNA; both proteins enhance the RNA binding activity of NXF1 and are required for NXF1 localization to the nuclear rim (PubMed:19165146). Involved in mRNA export of C5-methylcytosine (m5C)-containing mRNAs: specifically recognizes and binds m5C mRNAs and mediates their nucleo-cytoplasmic shuttling (PubMed:28418038). Acts as a chaperone and promotes the dimerization of transcription factors containing basic leucine zipper (bZIP) domains and thereby promotes transcriptional activation (PubMed:10488337). Involved in transcription elongation and genome stability (PubMed:12438613).</text>
</comment>
<comment type="function">
    <text evidence="12 22">(Microbial infection) The TREX complex is essential for the export of Kaposi's sarcoma-associated herpesvirus (KSHV) intronless mRNAs and infectious virus production; ALYREF/THOC4 mediates the recruitment of the TREX complex to the intronless viral mRNA.</text>
</comment>
<comment type="subunit">
    <text evidence="5 6 7 8 9 10 11 13 14 15 16 17 18 19 20 22 23 25 30 31 34 35">Homomultimer; predominantly hexamer when bound to EJC-RNA complex (PubMed:16314458, PubMed:37020021). Component of the transcription/export (TREX) complex at least composed of ALYREF/THOC4, DDX39B, SARNP/CIP29, CHTOP and the THO subcomplex (THOC1, THOC2, THOC3, THOC5, THOC6 and THOC7); in the complex interacts (via UAP56-binding motif) with DDX39B with low affinity but this interaction is likely stabilized by multimerization (PubMed:11979277, PubMed:12944400, PubMed:15833825, PubMed:15998806, PubMed:17190602, PubMed:17984224, PubMed:18974867, PubMed:23826332, PubMed:37020021). TREX seems to have a dynamic structure involving ATP-dependent remodeling; in the complex interacts with THOC1, THOC2 and THOC5 (PubMed:19165146, PubMed:23222130, PubMed:37020021). Component of the ALYREF/THOC4-EJC-RNA complex; in the complex interacts (via the WXHD motif) with EIF4A3 and interacts (via the RRM domain) with MAGOH; these interactions are likely specific to RNA-bound EJC (PubMed:14730019, PubMed:16314458, PubMed:37020021). Bridges the THO-DDX39B and EJC-RNA complexes to form the TREX-EJC-RNA complex; this interaction is essential for mRNP recognition and mRNA packaging (PubMed:37020021). Identified in the spliceosome C complex (PubMed:11991638, PubMed:12176931). Found in a mRNP complex with UPF3A and UPF3B (PubMed:11546873). Interacts with RBM8A, RBM15B, NCBP1, LEF1, RUNX1, RNPS1, SRRM1, IWS1 and EXOSC1 (PubMed:11118221, PubMed:11707413, PubMed:12944400, PubMed:17190602, PubMed:17234882). Interacts with RBM15B (PubMed:19586903). Interacts with NXF1; the interaction is direct (PubMed:11675789, PubMed:11707413, PubMed:14730019, PubMed:18974867, PubMed:19165146, PubMed:19586903, PubMed:23826332). Interacts with IVNS1ABP (via BACK domain); the interaction is indirect and likely plays a role in mRNA nuclear export (PubMed:30538201).</text>
</comment>
<comment type="subunit">
    <text evidence="22 27">(Microbial infection) Interacts with human Kaposi's sarcoma-associated herpesvirus (HHV-8) ORF57 protein; this interaction allows efficient export of HHV-8 early and late intronless transcripts.</text>
</comment>
<comment type="subunit">
    <text evidence="12 27">(Microbial infection) Interacts with HHV-1 ICP27 protein; this interaction recruits ALYREF to viral replication compartments and probably directs viral mRNA to the TAP/NXF1 pathway.</text>
</comment>
<comment type="interaction">
    <interactant intactId="EBI-347640">
        <id>Q86V81</id>
    </interactant>
    <interactant intactId="EBI-296087">
        <id>P31749</id>
        <label>AKT1</label>
    </interactant>
    <organismsDiffer>false</organismsDiffer>
    <experiments>5</experiments>
</comment>
<comment type="interaction">
    <interactant intactId="EBI-347640">
        <id>Q86V81</id>
    </interactant>
    <interactant intactId="EBI-444308">
        <id>P06493</id>
        <label>CDK1</label>
    </interactant>
    <organismsDiffer>false</organismsDiffer>
    <experiments>4</experiments>
</comment>
<comment type="interaction">
    <interactant intactId="EBI-347640">
        <id>Q86V81</id>
    </interactant>
    <interactant intactId="EBI-347794">
        <id>Q9Y3Y2</id>
        <label>CHTOP</label>
    </interactant>
    <organismsDiffer>false</organismsDiffer>
    <experiments>8</experiments>
</comment>
<comment type="interaction">
    <interactant intactId="EBI-347640">
        <id>Q86V81</id>
    </interactant>
    <interactant intactId="EBI-348622">
        <id>Q13838</id>
        <label>DDX39B</label>
    </interactant>
    <organismsDiffer>false</organismsDiffer>
    <experiments>5</experiments>
</comment>
<comment type="interaction">
    <interactant intactId="EBI-347640">
        <id>Q86V81</id>
    </interactant>
    <interactant intactId="EBI-398874">
        <id>Q9UBU9</id>
        <label>NXF1</label>
    </interactant>
    <organismsDiffer>false</organismsDiffer>
    <experiments>4</experiments>
</comment>
<comment type="interaction">
    <interactant intactId="EBI-347640">
        <id>Q86V81</id>
    </interactant>
    <interactant intactId="EBI-6884751">
        <id>Q2HR75</id>
        <label>ORF57</label>
    </interactant>
    <organismsDiffer>true</organismsDiffer>
    <experiments>4</experiments>
</comment>
<comment type="subcellular location">
    <subcellularLocation>
        <location evidence="4 24 31 33 39">Nucleus</location>
    </subcellularLocation>
    <subcellularLocation>
        <location evidence="24 31">Nucleus speckle</location>
    </subcellularLocation>
    <subcellularLocation>
        <location evidence="24 33">Cytoplasm</location>
    </subcellularLocation>
    <text evidence="24 31">Colocalizes with the core EJC, NXF1 and DDX39B in the nucleus and nuclear speckles. Travels to the cytoplasm as part of the exon junction complex (EJC) bound to mRNA (PubMed:19324961). Localizes to regions surrounding nuclear speckles known as perispeckles in which TREX complex assembly seems to occur (PubMed:23826332).</text>
</comment>
<comment type="tissue specificity">
    <text evidence="32">Expressed in a wide variety of cancer types.</text>
</comment>
<comment type="PTM">
    <text evidence="26 37">Arg-204 is dimethylated, probably to asymmetric dimethylarginine. Arginine methylation reduces RNA binding.</text>
</comment>
<comment type="PTM">
    <text evidence="1">Citrullinated by PADI4.</text>
</comment>
<comment type="miscellaneous">
    <text>Antibodies against ALYREF/THOC4 are found in sera of patients with systemic lupus erythematosus (SLE).</text>
</comment>
<comment type="similarity">
    <text evidence="38">Belongs to the ALYREF family.</text>
</comment>
<evidence type="ECO:0000250" key="1"/>
<evidence type="ECO:0000250" key="2">
    <source>
        <dbReference type="UniProtKB" id="O08583"/>
    </source>
</evidence>
<evidence type="ECO:0000256" key="3">
    <source>
        <dbReference type="SAM" id="MobiDB-lite"/>
    </source>
</evidence>
<evidence type="ECO:0000269" key="4">
    <source>
    </source>
</evidence>
<evidence type="ECO:0000269" key="5">
    <source>
    </source>
</evidence>
<evidence type="ECO:0000269" key="6">
    <source>
    </source>
</evidence>
<evidence type="ECO:0000269" key="7">
    <source>
    </source>
</evidence>
<evidence type="ECO:0000269" key="8">
    <source>
    </source>
</evidence>
<evidence type="ECO:0000269" key="9">
    <source>
    </source>
</evidence>
<evidence type="ECO:0000269" key="10">
    <source>
    </source>
</evidence>
<evidence type="ECO:0000269" key="11">
    <source>
    </source>
</evidence>
<evidence type="ECO:0000269" key="12">
    <source>
    </source>
</evidence>
<evidence type="ECO:0000269" key="13">
    <source>
    </source>
</evidence>
<evidence type="ECO:0000269" key="14">
    <source>
    </source>
</evidence>
<evidence type="ECO:0000269" key="15">
    <source>
    </source>
</evidence>
<evidence type="ECO:0000269" key="16">
    <source>
    </source>
</evidence>
<evidence type="ECO:0000269" key="17">
    <source>
    </source>
</evidence>
<evidence type="ECO:0000269" key="18">
    <source>
    </source>
</evidence>
<evidence type="ECO:0000269" key="19">
    <source>
    </source>
</evidence>
<evidence type="ECO:0000269" key="20">
    <source>
    </source>
</evidence>
<evidence type="ECO:0000269" key="21">
    <source>
    </source>
</evidence>
<evidence type="ECO:0000269" key="22">
    <source>
    </source>
</evidence>
<evidence type="ECO:0000269" key="23">
    <source>
    </source>
</evidence>
<evidence type="ECO:0000269" key="24">
    <source>
    </source>
</evidence>
<evidence type="ECO:0000269" key="25">
    <source>
    </source>
</evidence>
<evidence type="ECO:0000269" key="26">
    <source>
    </source>
</evidence>
<evidence type="ECO:0000269" key="27">
    <source>
    </source>
</evidence>
<evidence type="ECO:0000269" key="28">
    <source>
    </source>
</evidence>
<evidence type="ECO:0000269" key="29">
    <source>
    </source>
</evidence>
<evidence type="ECO:0000269" key="30">
    <source>
    </source>
</evidence>
<evidence type="ECO:0000269" key="31">
    <source>
    </source>
</evidence>
<evidence type="ECO:0000269" key="32">
    <source>
    </source>
</evidence>
<evidence type="ECO:0000269" key="33">
    <source>
    </source>
</evidence>
<evidence type="ECO:0000269" key="34">
    <source>
    </source>
</evidence>
<evidence type="ECO:0000269" key="35">
    <source>
    </source>
</evidence>
<evidence type="ECO:0000269" key="36">
    <source ref="3"/>
</evidence>
<evidence type="ECO:0000269" key="37">
    <source ref="4"/>
</evidence>
<evidence type="ECO:0000305" key="38"/>
<evidence type="ECO:0000305" key="39">
    <source>
    </source>
</evidence>
<evidence type="ECO:0007744" key="40">
    <source>
        <dbReference type="PDB" id="3ULH"/>
    </source>
</evidence>
<evidence type="ECO:0007744" key="41">
    <source>
        <dbReference type="PDB" id="7ZNJ"/>
    </source>
</evidence>
<evidence type="ECO:0007744" key="42">
    <source>
        <dbReference type="PDB" id="7ZNK"/>
    </source>
</evidence>
<evidence type="ECO:0007744" key="43">
    <source>
    </source>
</evidence>
<evidence type="ECO:0007744" key="44">
    <source>
    </source>
</evidence>
<evidence type="ECO:0007744" key="45">
    <source>
    </source>
</evidence>
<evidence type="ECO:0007744" key="46">
    <source>
    </source>
</evidence>
<evidence type="ECO:0007744" key="47">
    <source>
    </source>
</evidence>
<evidence type="ECO:0007744" key="48">
    <source>
    </source>
</evidence>
<evidence type="ECO:0007744" key="49">
    <source>
    </source>
</evidence>
<evidence type="ECO:0007744" key="50">
    <source>
    </source>
</evidence>
<evidence type="ECO:0007829" key="51">
    <source>
        <dbReference type="PDB" id="7ZNJ"/>
    </source>
</evidence>
<protein>
    <recommendedName>
        <fullName>THO complex subunit 4</fullName>
        <shortName>Tho4</shortName>
    </recommendedName>
    <alternativeName>
        <fullName>Ally of AML-1 and LEF-1</fullName>
    </alternativeName>
    <alternativeName>
        <fullName>Aly/REF export factor</fullName>
    </alternativeName>
    <alternativeName>
        <fullName>Transcriptional coactivator Aly/REF</fullName>
    </alternativeName>
    <alternativeName>
        <fullName>bZIP-enhancing factor BEF</fullName>
    </alternativeName>
</protein>
<gene>
    <name type="primary">ALYREF</name>
    <name type="synonym">ALY</name>
    <name type="synonym">BEF</name>
    <name type="synonym">THOC4</name>
</gene>
<dbReference type="EMBL" id="AC145207">
    <property type="status" value="NOT_ANNOTATED_CDS"/>
    <property type="molecule type" value="Genomic_DNA"/>
</dbReference>
<dbReference type="EMBL" id="BC052302">
    <property type="protein sequence ID" value="AAH52302.1"/>
    <property type="molecule type" value="mRNA"/>
</dbReference>
<dbReference type="EMBL" id="AF047002">
    <property type="protein sequence ID" value="AAD09608.1"/>
    <property type="molecule type" value="mRNA"/>
</dbReference>
<dbReference type="RefSeq" id="NP_005773.3">
    <property type="nucleotide sequence ID" value="NM_005782.3"/>
</dbReference>
<dbReference type="PDB" id="3ULH">
    <property type="method" value="X-ray"/>
    <property type="resolution" value="2.54 A"/>
    <property type="chains" value="A=78-183"/>
</dbReference>
<dbReference type="PDB" id="7ZNJ">
    <property type="method" value="EM"/>
    <property type="resolution" value="2.40 A"/>
    <property type="chains" value="D/I/N/d/i/n=56-182"/>
</dbReference>
<dbReference type="PDB" id="7ZNK">
    <property type="method" value="EM"/>
    <property type="resolution" value="3.90 A"/>
    <property type="chains" value="L/l=1-257"/>
</dbReference>
<dbReference type="PDBsum" id="3ULH"/>
<dbReference type="PDBsum" id="7ZNJ"/>
<dbReference type="PDBsum" id="7ZNK"/>
<dbReference type="EMDB" id="EMD-14803"/>
<dbReference type="EMDB" id="EMD-14804"/>
<dbReference type="SMR" id="Q86V81"/>
<dbReference type="BioGRID" id="115486">
    <property type="interactions" value="413"/>
</dbReference>
<dbReference type="ComplexPortal" id="CPX-2488">
    <property type="entry name" value="TREX transcription-export complex, DX39B variant"/>
</dbReference>
<dbReference type="ComplexPortal" id="CPX-7261">
    <property type="entry name" value="TREX transcription-export complex, DX39A variant"/>
</dbReference>
<dbReference type="ComplexPortal" id="CPX-9481">
    <property type="entry name" value="ALYREF-binding exon junction complex"/>
</dbReference>
<dbReference type="CORUM" id="Q86V81"/>
<dbReference type="DIP" id="DIP-32711N"/>
<dbReference type="FunCoup" id="Q86V81">
    <property type="interactions" value="3344"/>
</dbReference>
<dbReference type="IntAct" id="Q86V81">
    <property type="interactions" value="180"/>
</dbReference>
<dbReference type="MINT" id="Q86V81"/>
<dbReference type="STRING" id="9606.ENSP00000421592"/>
<dbReference type="ChEMBL" id="CHEMBL4296014"/>
<dbReference type="TCDB" id="3.A.22.1.2">
    <property type="family name" value="the transcription-coupled trex/tap nuclear mrna export complex (trex) family"/>
</dbReference>
<dbReference type="GlyGen" id="Q86V81">
    <property type="glycosylation" value="2 sites, 1 O-linked glycan (1 site)"/>
</dbReference>
<dbReference type="iPTMnet" id="Q86V81"/>
<dbReference type="MetOSite" id="Q86V81"/>
<dbReference type="PhosphoSitePlus" id="Q86V81"/>
<dbReference type="BioMuta" id="ALYREF"/>
<dbReference type="DMDM" id="48429165"/>
<dbReference type="jPOST" id="Q86V81"/>
<dbReference type="MassIVE" id="Q86V81"/>
<dbReference type="PaxDb" id="9606-ENSP00000421592"/>
<dbReference type="PeptideAtlas" id="Q86V81"/>
<dbReference type="ProteomicsDB" id="69973"/>
<dbReference type="Pumba" id="Q86V81"/>
<dbReference type="TopDownProteomics" id="Q86V81"/>
<dbReference type="ABCD" id="Q86V81">
    <property type="antibodies" value="1 sequenced antibody"/>
</dbReference>
<dbReference type="DNASU" id="10189"/>
<dbReference type="GeneID" id="10189"/>
<dbReference type="KEGG" id="hsa:10189"/>
<dbReference type="AGR" id="HGNC:19071"/>
<dbReference type="CTD" id="10189"/>
<dbReference type="DisGeNET" id="10189"/>
<dbReference type="GeneCards" id="ALYREF"/>
<dbReference type="HGNC" id="HGNC:19071">
    <property type="gene designation" value="ALYREF"/>
</dbReference>
<dbReference type="MalaCards" id="ALYREF"/>
<dbReference type="MIM" id="604171">
    <property type="type" value="gene"/>
</dbReference>
<dbReference type="neXtProt" id="NX_Q86V81"/>
<dbReference type="PharmGKB" id="PA134925107"/>
<dbReference type="eggNOG" id="KOG0533">
    <property type="taxonomic scope" value="Eukaryota"/>
</dbReference>
<dbReference type="InParanoid" id="Q86V81"/>
<dbReference type="OrthoDB" id="1049195at2759"/>
<dbReference type="PAN-GO" id="Q86V81">
    <property type="GO annotations" value="3 GO annotations based on evolutionary models"/>
</dbReference>
<dbReference type="PhylomeDB" id="Q86V81"/>
<dbReference type="PathwayCommons" id="Q86V81"/>
<dbReference type="Reactome" id="R-HSA-159227">
    <property type="pathway name" value="Transport of the SLBP independent Mature mRNA"/>
</dbReference>
<dbReference type="Reactome" id="R-HSA-159230">
    <property type="pathway name" value="Transport of the SLBP Dependant Mature mRNA"/>
</dbReference>
<dbReference type="Reactome" id="R-HSA-159231">
    <property type="pathway name" value="Transport of Mature mRNA Derived from an Intronless Transcript"/>
</dbReference>
<dbReference type="Reactome" id="R-HSA-159236">
    <property type="pathway name" value="Transport of Mature mRNA derived from an Intron-Containing Transcript"/>
</dbReference>
<dbReference type="Reactome" id="R-HSA-72163">
    <property type="pathway name" value="mRNA Splicing - Major Pathway"/>
</dbReference>
<dbReference type="Reactome" id="R-HSA-72187">
    <property type="pathway name" value="mRNA 3'-end processing"/>
</dbReference>
<dbReference type="Reactome" id="R-HSA-73856">
    <property type="pathway name" value="RNA Polymerase II Transcription Termination"/>
</dbReference>
<dbReference type="SignaLink" id="Q86V81"/>
<dbReference type="SIGNOR" id="Q86V81"/>
<dbReference type="BioGRID-ORCS" id="10189">
    <property type="hits" value="717 hits in 1166 CRISPR screens"/>
</dbReference>
<dbReference type="CD-CODE" id="804901D1">
    <property type="entry name" value="Nuclear speckle"/>
</dbReference>
<dbReference type="CD-CODE" id="91857CE7">
    <property type="entry name" value="Nucleolus"/>
</dbReference>
<dbReference type="CD-CODE" id="DEE660B4">
    <property type="entry name" value="Stress granule"/>
</dbReference>
<dbReference type="ChiTaRS" id="ALYREF">
    <property type="organism name" value="human"/>
</dbReference>
<dbReference type="EvolutionaryTrace" id="Q86V81"/>
<dbReference type="GeneWiki" id="THOC4"/>
<dbReference type="GenomeRNAi" id="10189"/>
<dbReference type="Pharos" id="Q86V81">
    <property type="development level" value="Tbio"/>
</dbReference>
<dbReference type="PRO" id="PR:Q86V81"/>
<dbReference type="Proteomes" id="UP000005640">
    <property type="component" value="Unplaced"/>
</dbReference>
<dbReference type="RNAct" id="Q86V81">
    <property type="molecule type" value="protein"/>
</dbReference>
<dbReference type="GO" id="GO:0071013">
    <property type="term" value="C:catalytic step 2 spliceosome"/>
    <property type="evidence" value="ECO:0000314"/>
    <property type="project" value="UniProtKB"/>
</dbReference>
<dbReference type="GO" id="GO:0005737">
    <property type="term" value="C:cytoplasm"/>
    <property type="evidence" value="ECO:0000314"/>
    <property type="project" value="UniProtKB"/>
</dbReference>
<dbReference type="GO" id="GO:0005829">
    <property type="term" value="C:cytosol"/>
    <property type="evidence" value="ECO:0000304"/>
    <property type="project" value="Reactome"/>
</dbReference>
<dbReference type="GO" id="GO:0070062">
    <property type="term" value="C:extracellular exosome"/>
    <property type="evidence" value="ECO:0007005"/>
    <property type="project" value="UniProtKB"/>
</dbReference>
<dbReference type="GO" id="GO:0016020">
    <property type="term" value="C:membrane"/>
    <property type="evidence" value="ECO:0007005"/>
    <property type="project" value="UniProtKB"/>
</dbReference>
<dbReference type="GO" id="GO:0016607">
    <property type="term" value="C:nuclear speck"/>
    <property type="evidence" value="ECO:0007669"/>
    <property type="project" value="UniProtKB-SubCell"/>
</dbReference>
<dbReference type="GO" id="GO:0005654">
    <property type="term" value="C:nucleoplasm"/>
    <property type="evidence" value="ECO:0000304"/>
    <property type="project" value="Reactome"/>
</dbReference>
<dbReference type="GO" id="GO:0005634">
    <property type="term" value="C:nucleus"/>
    <property type="evidence" value="ECO:0000314"/>
    <property type="project" value="UniProtKB"/>
</dbReference>
<dbReference type="GO" id="GO:0000346">
    <property type="term" value="C:transcription export complex"/>
    <property type="evidence" value="ECO:0000314"/>
    <property type="project" value="UniProtKB"/>
</dbReference>
<dbReference type="GO" id="GO:0062153">
    <property type="term" value="F:C5-methylcytidine-containing RNA reader activity"/>
    <property type="evidence" value="ECO:0000314"/>
    <property type="project" value="UniProtKB"/>
</dbReference>
<dbReference type="GO" id="GO:0003729">
    <property type="term" value="F:mRNA binding"/>
    <property type="evidence" value="ECO:0000318"/>
    <property type="project" value="GO_Central"/>
</dbReference>
<dbReference type="GO" id="GO:0003723">
    <property type="term" value="F:RNA binding"/>
    <property type="evidence" value="ECO:0007005"/>
    <property type="project" value="UniProtKB"/>
</dbReference>
<dbReference type="GO" id="GO:0006406">
    <property type="term" value="P:mRNA export from nucleus"/>
    <property type="evidence" value="ECO:0000315"/>
    <property type="project" value="UniProtKB"/>
</dbReference>
<dbReference type="GO" id="GO:0006397">
    <property type="term" value="P:mRNA processing"/>
    <property type="evidence" value="ECO:0007669"/>
    <property type="project" value="UniProtKB-KW"/>
</dbReference>
<dbReference type="GO" id="GO:0001649">
    <property type="term" value="P:osteoblast differentiation"/>
    <property type="evidence" value="ECO:0007005"/>
    <property type="project" value="UniProtKB"/>
</dbReference>
<dbReference type="GO" id="GO:0006405">
    <property type="term" value="P:RNA export from nucleus"/>
    <property type="evidence" value="ECO:0000314"/>
    <property type="project" value="UniProtKB"/>
</dbReference>
<dbReference type="GO" id="GO:0008380">
    <property type="term" value="P:RNA splicing"/>
    <property type="evidence" value="ECO:0007669"/>
    <property type="project" value="UniProtKB-KW"/>
</dbReference>
<dbReference type="CDD" id="cd12680">
    <property type="entry name" value="RRM_THOC4"/>
    <property type="match status" value="1"/>
</dbReference>
<dbReference type="FunFam" id="3.30.70.330:FF:000273">
    <property type="entry name" value="THO complex subunit 4"/>
    <property type="match status" value="1"/>
</dbReference>
<dbReference type="Gene3D" id="3.30.70.330">
    <property type="match status" value="1"/>
</dbReference>
<dbReference type="InterPro" id="IPR051229">
    <property type="entry name" value="ALYREF_mRNA_export"/>
</dbReference>
<dbReference type="InterPro" id="IPR025715">
    <property type="entry name" value="FoP_C"/>
</dbReference>
<dbReference type="InterPro" id="IPR012677">
    <property type="entry name" value="Nucleotide-bd_a/b_plait_sf"/>
</dbReference>
<dbReference type="InterPro" id="IPR035979">
    <property type="entry name" value="RBD_domain_sf"/>
</dbReference>
<dbReference type="InterPro" id="IPR000504">
    <property type="entry name" value="RRM_dom"/>
</dbReference>
<dbReference type="PANTHER" id="PTHR19965">
    <property type="entry name" value="RNA AND EXPORT FACTOR BINDING PROTEIN"/>
    <property type="match status" value="1"/>
</dbReference>
<dbReference type="PANTHER" id="PTHR19965:SF82">
    <property type="entry name" value="THO COMPLEX SUBUNIT 4"/>
    <property type="match status" value="1"/>
</dbReference>
<dbReference type="Pfam" id="PF13865">
    <property type="entry name" value="FoP_duplication"/>
    <property type="match status" value="1"/>
</dbReference>
<dbReference type="Pfam" id="PF00076">
    <property type="entry name" value="RRM_1"/>
    <property type="match status" value="1"/>
</dbReference>
<dbReference type="SMART" id="SM01218">
    <property type="entry name" value="FoP_duplication"/>
    <property type="match status" value="1"/>
</dbReference>
<dbReference type="SMART" id="SM00360">
    <property type="entry name" value="RRM"/>
    <property type="match status" value="1"/>
</dbReference>
<dbReference type="SUPFAM" id="SSF54928">
    <property type="entry name" value="RNA-binding domain, RBD"/>
    <property type="match status" value="1"/>
</dbReference>
<dbReference type="PROSITE" id="PS50102">
    <property type="entry name" value="RRM"/>
    <property type="match status" value="1"/>
</dbReference>